<organism>
    <name type="scientific">Clostridium botulinum (strain 657 / Type Ba4)</name>
    <dbReference type="NCBI Taxonomy" id="515621"/>
    <lineage>
        <taxon>Bacteria</taxon>
        <taxon>Bacillati</taxon>
        <taxon>Bacillota</taxon>
        <taxon>Clostridia</taxon>
        <taxon>Eubacteriales</taxon>
        <taxon>Clostridiaceae</taxon>
        <taxon>Clostridium</taxon>
    </lineage>
</organism>
<proteinExistence type="inferred from homology"/>
<gene>
    <name evidence="2" type="primary">ddl</name>
    <name type="ordered locus">CLJ_B0526</name>
</gene>
<comment type="function">
    <text evidence="2">Cell wall formation.</text>
</comment>
<comment type="catalytic activity">
    <reaction evidence="2">
        <text>2 D-alanine + ATP = D-alanyl-D-alanine + ADP + phosphate + H(+)</text>
        <dbReference type="Rhea" id="RHEA:11224"/>
        <dbReference type="ChEBI" id="CHEBI:15378"/>
        <dbReference type="ChEBI" id="CHEBI:30616"/>
        <dbReference type="ChEBI" id="CHEBI:43474"/>
        <dbReference type="ChEBI" id="CHEBI:57416"/>
        <dbReference type="ChEBI" id="CHEBI:57822"/>
        <dbReference type="ChEBI" id="CHEBI:456216"/>
        <dbReference type="EC" id="6.3.2.4"/>
    </reaction>
</comment>
<comment type="cofactor">
    <cofactor evidence="1">
        <name>Mg(2+)</name>
        <dbReference type="ChEBI" id="CHEBI:18420"/>
    </cofactor>
    <cofactor evidence="1">
        <name>Mn(2+)</name>
        <dbReference type="ChEBI" id="CHEBI:29035"/>
    </cofactor>
    <text evidence="1">Binds 2 magnesium or manganese ions per subunit.</text>
</comment>
<comment type="pathway">
    <text evidence="2">Cell wall biogenesis; peptidoglycan biosynthesis.</text>
</comment>
<comment type="subcellular location">
    <subcellularLocation>
        <location evidence="2">Cytoplasm</location>
    </subcellularLocation>
</comment>
<comment type="similarity">
    <text evidence="2">Belongs to the D-alanine--D-alanine ligase family.</text>
</comment>
<reference key="1">
    <citation type="submission" date="2008-05" db="EMBL/GenBank/DDBJ databases">
        <title>Genome sequence of Clostridium botulinum Ba4 strain 657.</title>
        <authorList>
            <person name="Shrivastava S."/>
            <person name="Brown J.L."/>
            <person name="Bruce D."/>
            <person name="Detter C."/>
            <person name="Munk C."/>
            <person name="Smith L.A."/>
            <person name="Smith T.J."/>
            <person name="Sutton G."/>
            <person name="Brettin T.S."/>
        </authorList>
    </citation>
    <scope>NUCLEOTIDE SEQUENCE [LARGE SCALE GENOMIC DNA]</scope>
    <source>
        <strain>657 / Type Ba4</strain>
    </source>
</reference>
<accession>C3L065</accession>
<evidence type="ECO:0000250" key="1"/>
<evidence type="ECO:0000255" key="2">
    <source>
        <dbReference type="HAMAP-Rule" id="MF_00047"/>
    </source>
</evidence>
<name>DDL_CLOB6</name>
<protein>
    <recommendedName>
        <fullName evidence="2">D-alanine--D-alanine ligase</fullName>
        <ecNumber evidence="2">6.3.2.4</ecNumber>
    </recommendedName>
    <alternativeName>
        <fullName evidence="2">D-Ala-D-Ala ligase</fullName>
    </alternativeName>
    <alternativeName>
        <fullName evidence="2">D-alanylalanine synthetase</fullName>
    </alternativeName>
</protein>
<sequence>MKIGVIMGGISTEREVSLNSGREVIKYLELLEHEIIPIIIDKKEDVVEKVKGIDFAFLALHGEFGEDGTVQSVLQTLDIPYSGCGPLTSAICMDKDMTKKILKYANINTADWVNVSSVEDIDYEAIEKIGYPVFVKPNSGGSSVATNLVKDGDGIKEAVELALKYDKEVMIENYTKGEEITCCMLNGKMLPVLAIRPHAEFFDYTAKYADGGSDEVVIELEENLHKKVEEMALACWKELKCEVYVRVDMIVKAGVPYVLELNTLPGMTKNSLFPKSANAVGISFAELLNSIVKYSLEVER</sequence>
<dbReference type="EC" id="6.3.2.4" evidence="2"/>
<dbReference type="EMBL" id="CP001083">
    <property type="protein sequence ID" value="ACQ51991.1"/>
    <property type="molecule type" value="Genomic_DNA"/>
</dbReference>
<dbReference type="RefSeq" id="WP_003359666.1">
    <property type="nucleotide sequence ID" value="NC_012658.1"/>
</dbReference>
<dbReference type="SMR" id="C3L065"/>
<dbReference type="KEGG" id="cbi:CLJ_B0526"/>
<dbReference type="HOGENOM" id="CLU_039268_1_1_9"/>
<dbReference type="UniPathway" id="UPA00219"/>
<dbReference type="Proteomes" id="UP000002333">
    <property type="component" value="Chromosome"/>
</dbReference>
<dbReference type="GO" id="GO:0005737">
    <property type="term" value="C:cytoplasm"/>
    <property type="evidence" value="ECO:0007669"/>
    <property type="project" value="UniProtKB-SubCell"/>
</dbReference>
<dbReference type="GO" id="GO:0005524">
    <property type="term" value="F:ATP binding"/>
    <property type="evidence" value="ECO:0007669"/>
    <property type="project" value="UniProtKB-KW"/>
</dbReference>
<dbReference type="GO" id="GO:0008716">
    <property type="term" value="F:D-alanine-D-alanine ligase activity"/>
    <property type="evidence" value="ECO:0007669"/>
    <property type="project" value="UniProtKB-UniRule"/>
</dbReference>
<dbReference type="GO" id="GO:0046872">
    <property type="term" value="F:metal ion binding"/>
    <property type="evidence" value="ECO:0007669"/>
    <property type="project" value="UniProtKB-KW"/>
</dbReference>
<dbReference type="GO" id="GO:0071555">
    <property type="term" value="P:cell wall organization"/>
    <property type="evidence" value="ECO:0007669"/>
    <property type="project" value="UniProtKB-KW"/>
</dbReference>
<dbReference type="GO" id="GO:0009252">
    <property type="term" value="P:peptidoglycan biosynthetic process"/>
    <property type="evidence" value="ECO:0007669"/>
    <property type="project" value="UniProtKB-UniRule"/>
</dbReference>
<dbReference type="GO" id="GO:0008360">
    <property type="term" value="P:regulation of cell shape"/>
    <property type="evidence" value="ECO:0007669"/>
    <property type="project" value="UniProtKB-KW"/>
</dbReference>
<dbReference type="FunFam" id="3.30.470.20:FF:000074">
    <property type="entry name" value="D-alanine--D-alanine ligase"/>
    <property type="match status" value="1"/>
</dbReference>
<dbReference type="FunFam" id="3.40.50.20:FF:000031">
    <property type="entry name" value="D-alanine--D-alanine ligase"/>
    <property type="match status" value="1"/>
</dbReference>
<dbReference type="Gene3D" id="3.40.50.20">
    <property type="match status" value="1"/>
</dbReference>
<dbReference type="Gene3D" id="3.30.1490.20">
    <property type="entry name" value="ATP-grasp fold, A domain"/>
    <property type="match status" value="1"/>
</dbReference>
<dbReference type="Gene3D" id="3.30.470.20">
    <property type="entry name" value="ATP-grasp fold, B domain"/>
    <property type="match status" value="1"/>
</dbReference>
<dbReference type="HAMAP" id="MF_00047">
    <property type="entry name" value="Dala_Dala_lig"/>
    <property type="match status" value="1"/>
</dbReference>
<dbReference type="InterPro" id="IPR011761">
    <property type="entry name" value="ATP-grasp"/>
</dbReference>
<dbReference type="InterPro" id="IPR013815">
    <property type="entry name" value="ATP_grasp_subdomain_1"/>
</dbReference>
<dbReference type="InterPro" id="IPR000291">
    <property type="entry name" value="D-Ala_lig_Van_CS"/>
</dbReference>
<dbReference type="InterPro" id="IPR005905">
    <property type="entry name" value="D_ala_D_ala"/>
</dbReference>
<dbReference type="InterPro" id="IPR011095">
    <property type="entry name" value="Dala_Dala_lig_C"/>
</dbReference>
<dbReference type="InterPro" id="IPR011127">
    <property type="entry name" value="Dala_Dala_lig_N"/>
</dbReference>
<dbReference type="InterPro" id="IPR016185">
    <property type="entry name" value="PreATP-grasp_dom_sf"/>
</dbReference>
<dbReference type="NCBIfam" id="TIGR01205">
    <property type="entry name" value="D_ala_D_alaTIGR"/>
    <property type="match status" value="1"/>
</dbReference>
<dbReference type="NCBIfam" id="NF002378">
    <property type="entry name" value="PRK01372.1"/>
    <property type="match status" value="1"/>
</dbReference>
<dbReference type="PANTHER" id="PTHR23132">
    <property type="entry name" value="D-ALANINE--D-ALANINE LIGASE"/>
    <property type="match status" value="1"/>
</dbReference>
<dbReference type="PANTHER" id="PTHR23132:SF23">
    <property type="entry name" value="D-ALANINE--D-ALANINE LIGASE B"/>
    <property type="match status" value="1"/>
</dbReference>
<dbReference type="Pfam" id="PF07478">
    <property type="entry name" value="Dala_Dala_lig_C"/>
    <property type="match status" value="1"/>
</dbReference>
<dbReference type="Pfam" id="PF01820">
    <property type="entry name" value="Dala_Dala_lig_N"/>
    <property type="match status" value="2"/>
</dbReference>
<dbReference type="PIRSF" id="PIRSF039102">
    <property type="entry name" value="Ddl/VanB"/>
    <property type="match status" value="1"/>
</dbReference>
<dbReference type="SMART" id="SM01209">
    <property type="entry name" value="GARS_A"/>
    <property type="match status" value="1"/>
</dbReference>
<dbReference type="SUPFAM" id="SSF56059">
    <property type="entry name" value="Glutathione synthetase ATP-binding domain-like"/>
    <property type="match status" value="1"/>
</dbReference>
<dbReference type="SUPFAM" id="SSF52440">
    <property type="entry name" value="PreATP-grasp domain"/>
    <property type="match status" value="1"/>
</dbReference>
<dbReference type="PROSITE" id="PS50975">
    <property type="entry name" value="ATP_GRASP"/>
    <property type="match status" value="1"/>
</dbReference>
<dbReference type="PROSITE" id="PS00843">
    <property type="entry name" value="DALA_DALA_LIGASE_1"/>
    <property type="match status" value="1"/>
</dbReference>
<dbReference type="PROSITE" id="PS00844">
    <property type="entry name" value="DALA_DALA_LIGASE_2"/>
    <property type="match status" value="1"/>
</dbReference>
<keyword id="KW-0067">ATP-binding</keyword>
<keyword id="KW-0133">Cell shape</keyword>
<keyword id="KW-0961">Cell wall biogenesis/degradation</keyword>
<keyword id="KW-0963">Cytoplasm</keyword>
<keyword id="KW-0436">Ligase</keyword>
<keyword id="KW-0460">Magnesium</keyword>
<keyword id="KW-0464">Manganese</keyword>
<keyword id="KW-0479">Metal-binding</keyword>
<keyword id="KW-0547">Nucleotide-binding</keyword>
<keyword id="KW-0573">Peptidoglycan synthesis</keyword>
<feature type="chain" id="PRO_1000202196" description="D-alanine--D-alanine ligase">
    <location>
        <begin position="1"/>
        <end position="300"/>
    </location>
</feature>
<feature type="domain" description="ATP-grasp" evidence="2">
    <location>
        <begin position="99"/>
        <end position="293"/>
    </location>
</feature>
<feature type="binding site" evidence="2">
    <location>
        <begin position="126"/>
        <end position="181"/>
    </location>
    <ligand>
        <name>ATP</name>
        <dbReference type="ChEBI" id="CHEBI:30616"/>
    </ligand>
</feature>
<feature type="binding site" evidence="2">
    <location>
        <position position="248"/>
    </location>
    <ligand>
        <name>Mg(2+)</name>
        <dbReference type="ChEBI" id="CHEBI:18420"/>
        <label>1</label>
    </ligand>
</feature>
<feature type="binding site" evidence="2">
    <location>
        <position position="260"/>
    </location>
    <ligand>
        <name>Mg(2+)</name>
        <dbReference type="ChEBI" id="CHEBI:18420"/>
        <label>1</label>
    </ligand>
</feature>
<feature type="binding site" evidence="2">
    <location>
        <position position="260"/>
    </location>
    <ligand>
        <name>Mg(2+)</name>
        <dbReference type="ChEBI" id="CHEBI:18420"/>
        <label>2</label>
    </ligand>
</feature>
<feature type="binding site" evidence="2">
    <location>
        <position position="262"/>
    </location>
    <ligand>
        <name>Mg(2+)</name>
        <dbReference type="ChEBI" id="CHEBI:18420"/>
        <label>2</label>
    </ligand>
</feature>